<protein>
    <recommendedName>
        <fullName>Phosphoribosylaminoimidazole carboxylase</fullName>
        <ecNumber>4.1.1.21</ecNumber>
    </recommendedName>
    <alternativeName>
        <fullName>AIR carboxylase</fullName>
        <shortName>AIRC</shortName>
    </alternativeName>
</protein>
<feature type="chain" id="PRO_0000075024" description="Phosphoribosylaminoimidazole carboxylase">
    <location>
        <begin position="1"/>
        <end position="582"/>
    </location>
</feature>
<feature type="domain" description="ATP-grasp" evidence="1">
    <location>
        <begin position="114"/>
        <end position="305"/>
    </location>
</feature>
<feature type="binding site" evidence="1">
    <location>
        <begin position="143"/>
        <end position="200"/>
    </location>
    <ligand>
        <name>ATP</name>
        <dbReference type="ChEBI" id="CHEBI:30616"/>
    </ligand>
</feature>
<reference key="1">
    <citation type="submission" date="1996-09" db="EMBL/GenBank/DDBJ databases">
        <authorList>
            <person name="Perfect J.R."/>
        </authorList>
    </citation>
    <scope>NUCLEOTIDE SEQUENCE [MRNA]</scope>
    <source>
        <strain>H99 / ATCC 208821 / CBS 10515 / FGSC 9487</strain>
    </source>
</reference>
<reference key="2">
    <citation type="journal article" date="2014" name="PLoS Genet.">
        <title>Analysis of the genome and transcriptome of Cryptococcus neoformans var. grubii reveals complex RNA expression and microevolution leading to virulence attenuation.</title>
        <authorList>
            <person name="Janbon G."/>
            <person name="Ormerod K.L."/>
            <person name="Paulet D."/>
            <person name="Byrnes E.J. III"/>
            <person name="Yadav V."/>
            <person name="Chatterjee G."/>
            <person name="Mullapudi N."/>
            <person name="Hon C.-C."/>
            <person name="Billmyre R.B."/>
            <person name="Brunel F."/>
            <person name="Bahn Y.-S."/>
            <person name="Chen W."/>
            <person name="Chen Y."/>
            <person name="Chow E.W.L."/>
            <person name="Coppee J.-Y."/>
            <person name="Floyd-Averette A."/>
            <person name="Gaillardin C."/>
            <person name="Gerik K.J."/>
            <person name="Goldberg J."/>
            <person name="Gonzalez-Hilarion S."/>
            <person name="Gujja S."/>
            <person name="Hamlin J.L."/>
            <person name="Hsueh Y.-P."/>
            <person name="Ianiri G."/>
            <person name="Jones S."/>
            <person name="Kodira C.D."/>
            <person name="Kozubowski L."/>
            <person name="Lam W."/>
            <person name="Marra M."/>
            <person name="Mesner L.D."/>
            <person name="Mieczkowski P.A."/>
            <person name="Moyrand F."/>
            <person name="Nielsen K."/>
            <person name="Proux C."/>
            <person name="Rossignol T."/>
            <person name="Schein J.E."/>
            <person name="Sun S."/>
            <person name="Wollschlaeger C."/>
            <person name="Wood I.A."/>
            <person name="Zeng Q."/>
            <person name="Neuveglise C."/>
            <person name="Newlon C.S."/>
            <person name="Perfect J.R."/>
            <person name="Lodge J.K."/>
            <person name="Idnurm A."/>
            <person name="Stajich J.E."/>
            <person name="Kronstad J.W."/>
            <person name="Sanyal K."/>
            <person name="Heitman J."/>
            <person name="Fraser J.A."/>
            <person name="Cuomo C.A."/>
            <person name="Dietrich F.S."/>
        </authorList>
    </citation>
    <scope>NUCLEOTIDE SEQUENCE [LARGE SCALE GENOMIC DNA]</scope>
    <source>
        <strain>H99 / ATCC 208821 / CBS 10515 / FGSC 9487</strain>
    </source>
</reference>
<dbReference type="EC" id="4.1.1.21"/>
<dbReference type="EMBL" id="U70673">
    <property type="protein sequence ID" value="AAB09711.1"/>
    <property type="status" value="ALT_INIT"/>
    <property type="molecule type" value="mRNA"/>
</dbReference>
<dbReference type="EMBL" id="CP003825">
    <property type="protein sequence ID" value="AFR95533.1"/>
    <property type="molecule type" value="Genomic_DNA"/>
</dbReference>
<dbReference type="RefSeq" id="XP_012050060.1">
    <property type="nucleotide sequence ID" value="XM_012194670.1"/>
</dbReference>
<dbReference type="SMR" id="P0C017"/>
<dbReference type="GeneID" id="23885928"/>
<dbReference type="KEGG" id="cng:CNAG_02294"/>
<dbReference type="VEuPathDB" id="FungiDB:CNAG_02294"/>
<dbReference type="HOGENOM" id="CLU_011534_2_1_1"/>
<dbReference type="OrthoDB" id="5288at5206"/>
<dbReference type="UniPathway" id="UPA00074">
    <property type="reaction ID" value="UER00130"/>
</dbReference>
<dbReference type="PHI-base" id="PHI:14"/>
<dbReference type="Proteomes" id="UP000010091">
    <property type="component" value="Chromosome 6"/>
</dbReference>
<dbReference type="GO" id="GO:0005524">
    <property type="term" value="F:ATP binding"/>
    <property type="evidence" value="ECO:0007669"/>
    <property type="project" value="UniProtKB-KW"/>
</dbReference>
<dbReference type="GO" id="GO:0046872">
    <property type="term" value="F:metal ion binding"/>
    <property type="evidence" value="ECO:0007669"/>
    <property type="project" value="InterPro"/>
</dbReference>
<dbReference type="GO" id="GO:0004638">
    <property type="term" value="F:phosphoribosylaminoimidazole carboxylase activity"/>
    <property type="evidence" value="ECO:0007669"/>
    <property type="project" value="UniProtKB-EC"/>
</dbReference>
<dbReference type="GO" id="GO:0006189">
    <property type="term" value="P:'de novo' IMP biosynthetic process"/>
    <property type="evidence" value="ECO:0007669"/>
    <property type="project" value="UniProtKB-UniPathway"/>
</dbReference>
<dbReference type="FunFam" id="3.40.50.1970:FF:000013">
    <property type="entry name" value="Phosphoribosylaminoimidazole carboxylase"/>
    <property type="match status" value="1"/>
</dbReference>
<dbReference type="FunFam" id="3.30.470.20:FF:000037">
    <property type="entry name" value="Phosphoribosylaminoimidazole carboxylase, chloroplastic"/>
    <property type="match status" value="1"/>
</dbReference>
<dbReference type="Gene3D" id="3.40.50.1970">
    <property type="match status" value="1"/>
</dbReference>
<dbReference type="Gene3D" id="3.40.50.20">
    <property type="match status" value="1"/>
</dbReference>
<dbReference type="Gene3D" id="3.30.1490.20">
    <property type="entry name" value="ATP-grasp fold, A domain"/>
    <property type="match status" value="1"/>
</dbReference>
<dbReference type="Gene3D" id="3.30.470.20">
    <property type="entry name" value="ATP-grasp fold, B domain"/>
    <property type="match status" value="1"/>
</dbReference>
<dbReference type="HAMAP" id="MF_01929">
    <property type="entry name" value="PurE_classI"/>
    <property type="match status" value="1"/>
</dbReference>
<dbReference type="HAMAP" id="MF_01928">
    <property type="entry name" value="PurK"/>
    <property type="match status" value="1"/>
</dbReference>
<dbReference type="InterPro" id="IPR016301">
    <property type="entry name" value="Ade2_fungi/plant"/>
</dbReference>
<dbReference type="InterPro" id="IPR011761">
    <property type="entry name" value="ATP-grasp"/>
</dbReference>
<dbReference type="InterPro" id="IPR003135">
    <property type="entry name" value="ATP-grasp_carboxylate-amine"/>
</dbReference>
<dbReference type="InterPro" id="IPR013815">
    <property type="entry name" value="ATP_grasp_subdomain_1"/>
</dbReference>
<dbReference type="InterPro" id="IPR016185">
    <property type="entry name" value="PreATP-grasp_dom_sf"/>
</dbReference>
<dbReference type="InterPro" id="IPR033747">
    <property type="entry name" value="PurE_ClassI"/>
</dbReference>
<dbReference type="InterPro" id="IPR000031">
    <property type="entry name" value="PurE_dom"/>
</dbReference>
<dbReference type="InterPro" id="IPR005875">
    <property type="entry name" value="PurK"/>
</dbReference>
<dbReference type="InterPro" id="IPR040686">
    <property type="entry name" value="PurK_C"/>
</dbReference>
<dbReference type="InterPro" id="IPR054350">
    <property type="entry name" value="PurT/PurK_preATP-grasp"/>
</dbReference>
<dbReference type="InterPro" id="IPR011054">
    <property type="entry name" value="Rudment_hybrid_motif"/>
</dbReference>
<dbReference type="NCBIfam" id="NF004679">
    <property type="entry name" value="PRK06019.1-5"/>
    <property type="match status" value="1"/>
</dbReference>
<dbReference type="NCBIfam" id="TIGR01162">
    <property type="entry name" value="purE"/>
    <property type="match status" value="1"/>
</dbReference>
<dbReference type="NCBIfam" id="TIGR01161">
    <property type="entry name" value="purK"/>
    <property type="match status" value="1"/>
</dbReference>
<dbReference type="PANTHER" id="PTHR11609:SF5">
    <property type="entry name" value="PHOSPHORIBOSYLAMINOIMIDAZOLE CARBOXYLASE"/>
    <property type="match status" value="1"/>
</dbReference>
<dbReference type="PANTHER" id="PTHR11609">
    <property type="entry name" value="PURINE BIOSYNTHESIS PROTEIN 6/7, PUR6/7"/>
    <property type="match status" value="1"/>
</dbReference>
<dbReference type="Pfam" id="PF00731">
    <property type="entry name" value="AIRC"/>
    <property type="match status" value="1"/>
</dbReference>
<dbReference type="Pfam" id="PF02222">
    <property type="entry name" value="ATP-grasp"/>
    <property type="match status" value="1"/>
</dbReference>
<dbReference type="Pfam" id="PF17769">
    <property type="entry name" value="PurK_C"/>
    <property type="match status" value="1"/>
</dbReference>
<dbReference type="Pfam" id="PF22660">
    <property type="entry name" value="RS_preATP-grasp-like"/>
    <property type="match status" value="1"/>
</dbReference>
<dbReference type="PIRSF" id="PIRSF001340">
    <property type="entry name" value="AIR_carboxylase"/>
    <property type="match status" value="1"/>
</dbReference>
<dbReference type="SMART" id="SM01001">
    <property type="entry name" value="AIRC"/>
    <property type="match status" value="1"/>
</dbReference>
<dbReference type="SUPFAM" id="SSF56059">
    <property type="entry name" value="Glutathione synthetase ATP-binding domain-like"/>
    <property type="match status" value="1"/>
</dbReference>
<dbReference type="SUPFAM" id="SSF52255">
    <property type="entry name" value="N5-CAIR mutase (phosphoribosylaminoimidazole carboxylase, PurE)"/>
    <property type="match status" value="1"/>
</dbReference>
<dbReference type="SUPFAM" id="SSF52440">
    <property type="entry name" value="PreATP-grasp domain"/>
    <property type="match status" value="1"/>
</dbReference>
<dbReference type="SUPFAM" id="SSF51246">
    <property type="entry name" value="Rudiment single hybrid motif"/>
    <property type="match status" value="1"/>
</dbReference>
<dbReference type="PROSITE" id="PS50975">
    <property type="entry name" value="ATP_GRASP"/>
    <property type="match status" value="1"/>
</dbReference>
<comment type="catalytic activity">
    <reaction>
        <text>5-amino-1-(5-phospho-D-ribosyl)imidazole-4-carboxylate + H(+) = 5-amino-1-(5-phospho-beta-D-ribosyl)imidazole + CO2</text>
        <dbReference type="Rhea" id="RHEA:10792"/>
        <dbReference type="ChEBI" id="CHEBI:15378"/>
        <dbReference type="ChEBI" id="CHEBI:16526"/>
        <dbReference type="ChEBI" id="CHEBI:77657"/>
        <dbReference type="ChEBI" id="CHEBI:137981"/>
        <dbReference type="EC" id="4.1.1.21"/>
    </reaction>
</comment>
<comment type="pathway">
    <text>Purine metabolism; IMP biosynthesis via de novo pathway; 5-amino-1-(5-phospho-D-ribosyl)imidazole-4-carboxylate from 5-amino-1-(5-phospho-D-ribosyl)imidazole (carboxylase route): step 1/1.</text>
</comment>
<comment type="similarity">
    <text evidence="2">In the C-terminal section; belongs to the AIR carboxylase family. Class I subfamily.</text>
</comment>
<comment type="sequence caution" evidence="2">
    <conflict type="erroneous initiation">
        <sequence resource="EMBL-CDS" id="AAB09711"/>
    </conflict>
    <text>Extended N-terminus.</text>
</comment>
<organism>
    <name type="scientific">Cryptococcus neoformans var. grubii serotype A (strain H99 / ATCC 208821 / CBS 10515 / FGSC 9487)</name>
    <name type="common">Filobasidiella neoformans var. grubii</name>
    <dbReference type="NCBI Taxonomy" id="235443"/>
    <lineage>
        <taxon>Eukaryota</taxon>
        <taxon>Fungi</taxon>
        <taxon>Dikarya</taxon>
        <taxon>Basidiomycota</taxon>
        <taxon>Agaricomycotina</taxon>
        <taxon>Tremellomycetes</taxon>
        <taxon>Tremellales</taxon>
        <taxon>Cryptococcaceae</taxon>
        <taxon>Cryptococcus</taxon>
        <taxon>Cryptococcus neoformans species complex</taxon>
    </lineage>
</organism>
<sequence length="582" mass="62429">MAPRKTVGILGGGQLGRMLTHPAALLGIPLLILDSGSFTPAKQTLLPPPSHSHPDGPFTSEPHIRKLASACDILTVEIEHVNADVLEAVEKEGLCEVQPSPKTIRLIQNKYDQKKYLAEKGVAVAPFEELPANPTEEDFKAIAGRLGLPLMLKAKTLAYDGRGNSPLKSTSSEDIQASLKFLGDRPLYAEGWAPFVKEVAVMVVRNKEGEVQSYDAVETIHRESILRVCLAPLRGERGVNQRARELAEKAVGHLEGAGIFGVEMFLMPDGELLLNEIAPRPHNSGHHTIEACLTSQFENHLRAILSLPLGSTALRVPSAAMVNILGASSTMDAIDKMADNALTVPGAAVHLYGKAESRKARKMGHITVTAESDAELNERLRTLLFAQPDAHADWIDLIAPPSPAPAHSHPKPLVGIIMGSDSDLPVMHPATKILEKFGVPYELTITSAHRTPERMVKYAKTAAGRGLRAIIAGAGGAAHLPGMVASETSLPVIGVPVKASVLDGVDSLYSIVQMPRGIPCATVGINNSTNAALLAIRILGTSVPALNKATEEYSKALEEEVLAKVDILEEEGWDKYIERLKK</sequence>
<gene>
    <name type="primary">ADE2</name>
    <name type="ORF">CNAG_02294</name>
</gene>
<keyword id="KW-0067">ATP-binding</keyword>
<keyword id="KW-0210">Decarboxylase</keyword>
<keyword id="KW-0456">Lyase</keyword>
<keyword id="KW-0547">Nucleotide-binding</keyword>
<keyword id="KW-0658">Purine biosynthesis</keyword>
<name>PUR6_CRYNH</name>
<accession>P0C017</accession>
<accession>J9VMR3</accession>
<accession>O93936</accession>
<accession>Q92233</accession>
<proteinExistence type="evidence at transcript level"/>
<evidence type="ECO:0000255" key="1">
    <source>
        <dbReference type="PROSITE-ProRule" id="PRU00409"/>
    </source>
</evidence>
<evidence type="ECO:0000305" key="2"/>